<dbReference type="EMBL" id="AJ242873">
    <property type="protein sequence ID" value="CAB65127.1"/>
    <property type="molecule type" value="mRNA"/>
</dbReference>
<dbReference type="SMR" id="Q9SCB9"/>
<dbReference type="ExpressionAtlas" id="Q9SCB9">
    <property type="expression patterns" value="baseline and differential"/>
</dbReference>
<dbReference type="GO" id="GO:0000221">
    <property type="term" value="C:vacuolar proton-transporting V-type ATPase, V1 domain"/>
    <property type="evidence" value="ECO:0007669"/>
    <property type="project" value="TreeGrafter"/>
</dbReference>
<dbReference type="GO" id="GO:0046961">
    <property type="term" value="F:proton-transporting ATPase activity, rotational mechanism"/>
    <property type="evidence" value="ECO:0007669"/>
    <property type="project" value="InterPro"/>
</dbReference>
<dbReference type="CDD" id="cd14785">
    <property type="entry name" value="V-ATPase_C"/>
    <property type="match status" value="1"/>
</dbReference>
<dbReference type="FunFam" id="3.30.70.100:FF:000002">
    <property type="entry name" value="V-type proton ATPase subunit C"/>
    <property type="match status" value="1"/>
</dbReference>
<dbReference type="Gene3D" id="3.30.70.100">
    <property type="match status" value="1"/>
</dbReference>
<dbReference type="Gene3D" id="1.20.1460.10">
    <property type="entry name" value="subunit c (vma5p) of the yeast v-atpase, domain 2"/>
    <property type="match status" value="1"/>
</dbReference>
<dbReference type="Gene3D" id="3.30.70.1180">
    <property type="entry name" value="Vacuolar atp synthase subunit c, domain 1"/>
    <property type="match status" value="1"/>
</dbReference>
<dbReference type="InterPro" id="IPR004907">
    <property type="entry name" value="ATPase_V1-cplx_csu"/>
</dbReference>
<dbReference type="InterPro" id="IPR036132">
    <property type="entry name" value="Vac_ATP_synth_c_sf"/>
</dbReference>
<dbReference type="PANTHER" id="PTHR10137">
    <property type="entry name" value="V-TYPE PROTON ATPASE SUBUNIT C"/>
    <property type="match status" value="1"/>
</dbReference>
<dbReference type="PANTHER" id="PTHR10137:SF0">
    <property type="entry name" value="V-TYPE PROTON ATPASE SUBUNIT C"/>
    <property type="match status" value="1"/>
</dbReference>
<dbReference type="Pfam" id="PF03223">
    <property type="entry name" value="V-ATPase_C"/>
    <property type="match status" value="1"/>
</dbReference>
<dbReference type="SUPFAM" id="SSF118203">
    <property type="entry name" value="Vacuolar ATP synthase subunit C"/>
    <property type="match status" value="1"/>
</dbReference>
<comment type="function">
    <text evidence="1">Subunit of the peripheral V1 complex of vacuolar ATPase. Subunit C is necessary for the assembly of the catalytic sector of the enzyme and is likely to have a specific function in its catalytic activity. V-ATPase is responsible for acidifying a variety of intracellular compartments in eukaryotic cells (By similarity).</text>
</comment>
<comment type="subunit">
    <text evidence="1">V-ATPase is a heteromultimeric enzyme composed of a peripheral catalytic V1 complex (components A to H) attached to an integral membrane V0 proton pore complex (components: a, c, c', c'' and d).</text>
</comment>
<comment type="subcellular location">
    <subcellularLocation>
        <location>Vacuole membrane</location>
    </subcellularLocation>
    <text>Tonoplast.</text>
</comment>
<comment type="similarity">
    <text evidence="2">Belongs to the V-ATPase C subunit family.</text>
</comment>
<gene>
    <name type="primary">VATC</name>
    <name type="synonym">ATC</name>
</gene>
<proteinExistence type="evidence at protein level"/>
<protein>
    <recommendedName>
        <fullName>V-type proton ATPase subunit C</fullName>
        <shortName>V-ATPase subunit C</shortName>
    </recommendedName>
    <alternativeName>
        <fullName>Vacuolar proton pump subunit C</fullName>
    </alternativeName>
</protein>
<evidence type="ECO:0000250" key="1"/>
<evidence type="ECO:0000305" key="2"/>
<keyword id="KW-0903">Direct protein sequencing</keyword>
<keyword id="KW-0375">Hydrogen ion transport</keyword>
<keyword id="KW-0406">Ion transport</keyword>
<keyword id="KW-0472">Membrane</keyword>
<keyword id="KW-0813">Transport</keyword>
<keyword id="KW-0926">Vacuole</keyword>
<feature type="chain" id="PRO_0000209356" description="V-type proton ATPase subunit C">
    <location>
        <begin position="1"/>
        <end position="354"/>
    </location>
</feature>
<name>VATC_HORVU</name>
<reference key="1">
    <citation type="journal article" date="1999" name="FEBS Lett.">
        <title>Subunit C of the vacuolar H+-ATPase of Hordeum vulgare.</title>
        <authorList>
            <person name="Tavakoli N."/>
            <person name="Eckerskorn C."/>
            <person name="Golldack D."/>
            <person name="Dietz K.-J."/>
        </authorList>
    </citation>
    <scope>NUCLEOTIDE SEQUENCE [MRNA]</scope>
    <scope>PROTEIN SEQUENCE OF 143-151 AND 249-263</scope>
    <source>
        <strain>cv. Gerbel</strain>
        <tissue>Leaf</tissue>
    </source>
</reference>
<accession>Q9SCB9</accession>
<sequence length="354" mass="39985">MATRYWIAALPVADDNVAAGKTALWARLQEAISRHSFDTPLYRFTVPDLRPGTLDSLLALSDDLVKSNIFIEGVSHKIRRQIEDLERAGGVEPGTLTVDGVPVDSYLTRFVWDEGKYPVNAPLKETVASIQSQVAKIEDDMKVRVAEYGNVKSQLGAINRKQTGSLAVRDLSNLIKPEDMVTSEHLVTLLSIVPKYSQKDWLASYESLDTFVVPRSSKKLYEDNEYALYTVTLFAKVVDNFKVHAREKGFQIRDFEYSPEAQESRKQELEKLLQDQEVMRTSPIAMGAMLATVRVFSSWDAFSSAVRVFVESILRYGSACTVPVCCPSTIYKEREKSKEHLGRAMRQYQQLLEI</sequence>
<organism>
    <name type="scientific">Hordeum vulgare</name>
    <name type="common">Barley</name>
    <dbReference type="NCBI Taxonomy" id="4513"/>
    <lineage>
        <taxon>Eukaryota</taxon>
        <taxon>Viridiplantae</taxon>
        <taxon>Streptophyta</taxon>
        <taxon>Embryophyta</taxon>
        <taxon>Tracheophyta</taxon>
        <taxon>Spermatophyta</taxon>
        <taxon>Magnoliopsida</taxon>
        <taxon>Liliopsida</taxon>
        <taxon>Poales</taxon>
        <taxon>Poaceae</taxon>
        <taxon>BOP clade</taxon>
        <taxon>Pooideae</taxon>
        <taxon>Triticodae</taxon>
        <taxon>Triticeae</taxon>
        <taxon>Hordeinae</taxon>
        <taxon>Hordeum</taxon>
    </lineage>
</organism>